<name>Y1494_XYLFA</name>
<feature type="chain" id="PRO_0000202388" description="UPF0162 protein XF_1494">
    <location>
        <begin position="1"/>
        <end position="281"/>
    </location>
</feature>
<feature type="repeat" description="TPR 1">
    <location>
        <begin position="193"/>
        <end position="226"/>
    </location>
</feature>
<feature type="repeat" description="TPR 2">
    <location>
        <begin position="227"/>
        <end position="260"/>
    </location>
</feature>
<sequence>MVEQLLLPLWNSLATVDDETLPLMSTALLIARDEYPDLDANLYDTLVQSYVEYLRSEVEEISLWPLKMAAVNRYLFQKLGYSGNHDEYYDPRNSYLNQVFERRLGNPISLAVIQIEVARRLGIPLDGVSFPGHFLVRLPVDDGILVMDPFNGGRPLDAEELRERVRPHLGGEVPDDRALAQILNPAPHRTILVRILRNLHSVYANTNRWDRAARCADRILKLVPNQPEALRDRGLAYLQLGHRSGARNDLTRYLQLYPSTHNVDMVRGHLVDLSNERIQTH</sequence>
<protein>
    <recommendedName>
        <fullName>UPF0162 protein XF_1494</fullName>
    </recommendedName>
</protein>
<accession>Q9PD85</accession>
<evidence type="ECO:0000305" key="1"/>
<proteinExistence type="inferred from homology"/>
<reference key="1">
    <citation type="journal article" date="2000" name="Nature">
        <title>The genome sequence of the plant pathogen Xylella fastidiosa.</title>
        <authorList>
            <person name="Simpson A.J.G."/>
            <person name="Reinach F.C."/>
            <person name="Arruda P."/>
            <person name="Abreu F.A."/>
            <person name="Acencio M."/>
            <person name="Alvarenga R."/>
            <person name="Alves L.M.C."/>
            <person name="Araya J.E."/>
            <person name="Baia G.S."/>
            <person name="Baptista C.S."/>
            <person name="Barros M.H."/>
            <person name="Bonaccorsi E.D."/>
            <person name="Bordin S."/>
            <person name="Bove J.M."/>
            <person name="Briones M.R.S."/>
            <person name="Bueno M.R.P."/>
            <person name="Camargo A.A."/>
            <person name="Camargo L.E.A."/>
            <person name="Carraro D.M."/>
            <person name="Carrer H."/>
            <person name="Colauto N.B."/>
            <person name="Colombo C."/>
            <person name="Costa F.F."/>
            <person name="Costa M.C.R."/>
            <person name="Costa-Neto C.M."/>
            <person name="Coutinho L.L."/>
            <person name="Cristofani M."/>
            <person name="Dias-Neto E."/>
            <person name="Docena C."/>
            <person name="El-Dorry H."/>
            <person name="Facincani A.P."/>
            <person name="Ferreira A.J.S."/>
            <person name="Ferreira V.C.A."/>
            <person name="Ferro J.A."/>
            <person name="Fraga J.S."/>
            <person name="Franca S.C."/>
            <person name="Franco M.C."/>
            <person name="Frohme M."/>
            <person name="Furlan L.R."/>
            <person name="Garnier M."/>
            <person name="Goldman G.H."/>
            <person name="Goldman M.H.S."/>
            <person name="Gomes S.L."/>
            <person name="Gruber A."/>
            <person name="Ho P.L."/>
            <person name="Hoheisel J.D."/>
            <person name="Junqueira M.L."/>
            <person name="Kemper E.L."/>
            <person name="Kitajima J.P."/>
            <person name="Krieger J.E."/>
            <person name="Kuramae E.E."/>
            <person name="Laigret F."/>
            <person name="Lambais M.R."/>
            <person name="Leite L.C.C."/>
            <person name="Lemos E.G.M."/>
            <person name="Lemos M.V.F."/>
            <person name="Lopes S.A."/>
            <person name="Lopes C.R."/>
            <person name="Machado J.A."/>
            <person name="Machado M.A."/>
            <person name="Madeira A.M.B.N."/>
            <person name="Madeira H.M.F."/>
            <person name="Marino C.L."/>
            <person name="Marques M.V."/>
            <person name="Martins E.A.L."/>
            <person name="Martins E.M.F."/>
            <person name="Matsukuma A.Y."/>
            <person name="Menck C.F.M."/>
            <person name="Miracca E.C."/>
            <person name="Miyaki C.Y."/>
            <person name="Monteiro-Vitorello C.B."/>
            <person name="Moon D.H."/>
            <person name="Nagai M.A."/>
            <person name="Nascimento A.L.T.O."/>
            <person name="Netto L.E.S."/>
            <person name="Nhani A. Jr."/>
            <person name="Nobrega F.G."/>
            <person name="Nunes L.R."/>
            <person name="Oliveira M.A."/>
            <person name="de Oliveira M.C."/>
            <person name="de Oliveira R.C."/>
            <person name="Palmieri D.A."/>
            <person name="Paris A."/>
            <person name="Peixoto B.R."/>
            <person name="Pereira G.A.G."/>
            <person name="Pereira H.A. Jr."/>
            <person name="Pesquero J.B."/>
            <person name="Quaggio R.B."/>
            <person name="Roberto P.G."/>
            <person name="Rodrigues V."/>
            <person name="de Rosa A.J.M."/>
            <person name="de Rosa V.E. Jr."/>
            <person name="de Sa R.G."/>
            <person name="Santelli R.V."/>
            <person name="Sawasaki H.E."/>
            <person name="da Silva A.C.R."/>
            <person name="da Silva A.M."/>
            <person name="da Silva F.R."/>
            <person name="Silva W.A. Jr."/>
            <person name="da Silveira J.F."/>
            <person name="Silvestri M.L.Z."/>
            <person name="Siqueira W.J."/>
            <person name="de Souza A.A."/>
            <person name="de Souza A.P."/>
            <person name="Terenzi M.F."/>
            <person name="Truffi D."/>
            <person name="Tsai S.M."/>
            <person name="Tsuhako M.H."/>
            <person name="Vallada H."/>
            <person name="Van Sluys M.A."/>
            <person name="Verjovski-Almeida S."/>
            <person name="Vettore A.L."/>
            <person name="Zago M.A."/>
            <person name="Zatz M."/>
            <person name="Meidanis J."/>
            <person name="Setubal J.C."/>
        </authorList>
    </citation>
    <scope>NUCLEOTIDE SEQUENCE [LARGE SCALE GENOMIC DNA]</scope>
    <source>
        <strain>9a5c</strain>
    </source>
</reference>
<organism>
    <name type="scientific">Xylella fastidiosa (strain 9a5c)</name>
    <dbReference type="NCBI Taxonomy" id="160492"/>
    <lineage>
        <taxon>Bacteria</taxon>
        <taxon>Pseudomonadati</taxon>
        <taxon>Pseudomonadota</taxon>
        <taxon>Gammaproteobacteria</taxon>
        <taxon>Lysobacterales</taxon>
        <taxon>Lysobacteraceae</taxon>
        <taxon>Xylella</taxon>
    </lineage>
</organism>
<comment type="similarity">
    <text evidence="1">Belongs to the UPF0162 family.</text>
</comment>
<comment type="sequence caution" evidence="1">
    <conflict type="erroneous initiation">
        <sequence resource="EMBL-CDS" id="AAF84303"/>
    </conflict>
    <text>Extended N-terminus.</text>
</comment>
<keyword id="KW-0677">Repeat</keyword>
<keyword id="KW-0802">TPR repeat</keyword>
<dbReference type="EMBL" id="AE003849">
    <property type="protein sequence ID" value="AAF84303.1"/>
    <property type="status" value="ALT_INIT"/>
    <property type="molecule type" value="Genomic_DNA"/>
</dbReference>
<dbReference type="PIR" id="B82674">
    <property type="entry name" value="B82674"/>
</dbReference>
<dbReference type="RefSeq" id="WP_023906702.1">
    <property type="nucleotide sequence ID" value="NC_002488.3"/>
</dbReference>
<dbReference type="SMR" id="Q9PD85"/>
<dbReference type="STRING" id="160492.XF_1494"/>
<dbReference type="KEGG" id="xfa:XF_1494"/>
<dbReference type="eggNOG" id="COG2912">
    <property type="taxonomic scope" value="Bacteria"/>
</dbReference>
<dbReference type="HOGENOM" id="CLU_063810_1_0_6"/>
<dbReference type="Proteomes" id="UP000000812">
    <property type="component" value="Chromosome"/>
</dbReference>
<dbReference type="Gene3D" id="1.25.40.10">
    <property type="entry name" value="Tetratricopeptide repeat domain"/>
    <property type="match status" value="1"/>
</dbReference>
<dbReference type="InterPro" id="IPR032698">
    <property type="entry name" value="SirB1_N"/>
</dbReference>
<dbReference type="InterPro" id="IPR011990">
    <property type="entry name" value="TPR-like_helical_dom_sf"/>
</dbReference>
<dbReference type="InterPro" id="IPR019734">
    <property type="entry name" value="TPR_rpt"/>
</dbReference>
<dbReference type="PANTHER" id="PTHR31350:SF21">
    <property type="entry name" value="F-BOX ONLY PROTEIN 21"/>
    <property type="match status" value="1"/>
</dbReference>
<dbReference type="PANTHER" id="PTHR31350">
    <property type="entry name" value="SI:DKEY-261L7.2"/>
    <property type="match status" value="1"/>
</dbReference>
<dbReference type="Pfam" id="PF13371">
    <property type="entry name" value="TPR_9"/>
    <property type="match status" value="1"/>
</dbReference>
<dbReference type="Pfam" id="PF13369">
    <property type="entry name" value="Transglut_core2"/>
    <property type="match status" value="1"/>
</dbReference>
<dbReference type="SMART" id="SM00028">
    <property type="entry name" value="TPR"/>
    <property type="match status" value="2"/>
</dbReference>
<dbReference type="SUPFAM" id="SSF48452">
    <property type="entry name" value="TPR-like"/>
    <property type="match status" value="1"/>
</dbReference>
<dbReference type="PROSITE" id="PS50005">
    <property type="entry name" value="TPR"/>
    <property type="match status" value="2"/>
</dbReference>
<dbReference type="PROSITE" id="PS50293">
    <property type="entry name" value="TPR_REGION"/>
    <property type="match status" value="1"/>
</dbReference>
<gene>
    <name type="ordered locus">XF_1494</name>
</gene>